<evidence type="ECO:0000250" key="1"/>
<evidence type="ECO:0000305" key="2"/>
<feature type="chain" id="PRO_0000294097" description="Uncharacterized protein YqgB">
    <location>
        <begin position="1"/>
        <end position="43"/>
    </location>
</feature>
<organism>
    <name type="scientific">Shigella boydii serotype 4 (strain Sb227)</name>
    <dbReference type="NCBI Taxonomy" id="300268"/>
    <lineage>
        <taxon>Bacteria</taxon>
        <taxon>Pseudomonadati</taxon>
        <taxon>Pseudomonadota</taxon>
        <taxon>Gammaproteobacteria</taxon>
        <taxon>Enterobacterales</taxon>
        <taxon>Enterobacteriaceae</taxon>
        <taxon>Shigella</taxon>
    </lineage>
</organism>
<keyword id="KW-0963">Cytoplasm</keyword>
<proteinExistence type="inferred from homology"/>
<sequence>MKKKPVAQLERQHSLLENPCAYGLLSQFQAAIVVNCFTLNKII</sequence>
<name>YQGB_SHIBS</name>
<dbReference type="EMBL" id="CP000036">
    <property type="protein sequence ID" value="ABB67556.1"/>
    <property type="status" value="ALT_INIT"/>
    <property type="molecule type" value="Genomic_DNA"/>
</dbReference>
<dbReference type="RefSeq" id="WP_001297406.1">
    <property type="nucleotide sequence ID" value="NC_007613.1"/>
</dbReference>
<dbReference type="GeneID" id="93779056"/>
<dbReference type="KEGG" id="sbo:SBO_3050"/>
<dbReference type="HOGENOM" id="CLU_216465_0_0_6"/>
<dbReference type="Proteomes" id="UP000007067">
    <property type="component" value="Chromosome"/>
</dbReference>
<dbReference type="GO" id="GO:0005737">
    <property type="term" value="C:cytoplasm"/>
    <property type="evidence" value="ECO:0007669"/>
    <property type="project" value="UniProtKB-SubCell"/>
</dbReference>
<dbReference type="InterPro" id="IPR020196">
    <property type="entry name" value="Uncharacterised_YqgB"/>
</dbReference>
<dbReference type="NCBIfam" id="NF033844">
    <property type="entry name" value="small_YqgB"/>
    <property type="match status" value="1"/>
</dbReference>
<dbReference type="Pfam" id="PF11036">
    <property type="entry name" value="YqgB"/>
    <property type="match status" value="1"/>
</dbReference>
<gene>
    <name type="primary">yqgB</name>
    <name type="ordered locus">SBO_3050</name>
</gene>
<comment type="subcellular location">
    <subcellularLocation>
        <location evidence="1">Cytoplasm</location>
    </subcellularLocation>
</comment>
<comment type="similarity">
    <text evidence="2">Belongs to the YqgB family.</text>
</comment>
<comment type="sequence caution" evidence="2">
    <conflict type="erroneous initiation">
        <sequence resource="EMBL-CDS" id="ABB67556"/>
    </conflict>
    <text>Extended N-terminus.</text>
</comment>
<accession>Q31WK2</accession>
<protein>
    <recommendedName>
        <fullName>Uncharacterized protein YqgB</fullName>
    </recommendedName>
</protein>
<reference key="1">
    <citation type="journal article" date="2005" name="Nucleic Acids Res.">
        <title>Genome dynamics and diversity of Shigella species, the etiologic agents of bacillary dysentery.</title>
        <authorList>
            <person name="Yang F."/>
            <person name="Yang J."/>
            <person name="Zhang X."/>
            <person name="Chen L."/>
            <person name="Jiang Y."/>
            <person name="Yan Y."/>
            <person name="Tang X."/>
            <person name="Wang J."/>
            <person name="Xiong Z."/>
            <person name="Dong J."/>
            <person name="Xue Y."/>
            <person name="Zhu Y."/>
            <person name="Xu X."/>
            <person name="Sun L."/>
            <person name="Chen S."/>
            <person name="Nie H."/>
            <person name="Peng J."/>
            <person name="Xu J."/>
            <person name="Wang Y."/>
            <person name="Yuan Z."/>
            <person name="Wen Y."/>
            <person name="Yao Z."/>
            <person name="Shen Y."/>
            <person name="Qiang B."/>
            <person name="Hou Y."/>
            <person name="Yu J."/>
            <person name="Jin Q."/>
        </authorList>
    </citation>
    <scope>NUCLEOTIDE SEQUENCE [LARGE SCALE GENOMIC DNA]</scope>
    <source>
        <strain>Sb227</strain>
    </source>
</reference>